<proteinExistence type="inferred from homology"/>
<comment type="function">
    <text evidence="2">This is one of the proteins that bind and probably mediate the attachment of the 5S RNA into the large ribosomal subunit, where it forms part of the central protuberance. In the 70S ribosome it contacts protein S13 of the 30S subunit (bridge B1b), connecting the 2 subunits; this bridge is implicated in subunit movement. Contacts the P site tRNA; the 5S rRNA and some of its associated proteins might help stabilize positioning of ribosome-bound tRNAs.</text>
</comment>
<comment type="subunit">
    <text evidence="2">Part of the 50S ribosomal subunit; part of the 5S rRNA/L5/L18/L25 subcomplex. Contacts the 5S rRNA and the P site tRNA. Forms a bridge to the 30S subunit in the 70S ribosome.</text>
</comment>
<comment type="similarity">
    <text evidence="2">Belongs to the universal ribosomal protein uL5 family.</text>
</comment>
<organism>
    <name type="scientific">Haemophilus influenzae (strain ATCC 51907 / DSM 11121 / KW20 / Rd)</name>
    <dbReference type="NCBI Taxonomy" id="71421"/>
    <lineage>
        <taxon>Bacteria</taxon>
        <taxon>Pseudomonadati</taxon>
        <taxon>Pseudomonadota</taxon>
        <taxon>Gammaproteobacteria</taxon>
        <taxon>Pasteurellales</taxon>
        <taxon>Pasteurellaceae</taxon>
        <taxon>Haemophilus</taxon>
    </lineage>
</organism>
<gene>
    <name evidence="2" type="primary">rplE</name>
    <name evidence="2" type="synonym">rpl5</name>
    <name type="ordered locus">HI_0790</name>
</gene>
<dbReference type="EMBL" id="L42023">
    <property type="protein sequence ID" value="AAC22448.1"/>
    <property type="molecule type" value="Genomic_DNA"/>
</dbReference>
<dbReference type="PIR" id="H64093">
    <property type="entry name" value="H64093"/>
</dbReference>
<dbReference type="RefSeq" id="NP_438949.3">
    <property type="nucleotide sequence ID" value="NC_000907.1"/>
</dbReference>
<dbReference type="SMR" id="P44346"/>
<dbReference type="STRING" id="71421.HI_0790"/>
<dbReference type="EnsemblBacteria" id="AAC22448">
    <property type="protein sequence ID" value="AAC22448"/>
    <property type="gene ID" value="HI_0790"/>
</dbReference>
<dbReference type="KEGG" id="hin:HI_0790"/>
<dbReference type="PATRIC" id="fig|71421.8.peg.829"/>
<dbReference type="eggNOG" id="COG0094">
    <property type="taxonomic scope" value="Bacteria"/>
</dbReference>
<dbReference type="HOGENOM" id="CLU_061015_2_1_6"/>
<dbReference type="OrthoDB" id="9806626at2"/>
<dbReference type="BioCyc" id="HINF71421:G1GJ1-830-MONOMER"/>
<dbReference type="Proteomes" id="UP000000579">
    <property type="component" value="Chromosome"/>
</dbReference>
<dbReference type="GO" id="GO:0022625">
    <property type="term" value="C:cytosolic large ribosomal subunit"/>
    <property type="evidence" value="ECO:0000318"/>
    <property type="project" value="GO_Central"/>
</dbReference>
<dbReference type="GO" id="GO:0003723">
    <property type="term" value="F:RNA binding"/>
    <property type="evidence" value="ECO:0000318"/>
    <property type="project" value="GO_Central"/>
</dbReference>
<dbReference type="GO" id="GO:0019843">
    <property type="term" value="F:rRNA binding"/>
    <property type="evidence" value="ECO:0007669"/>
    <property type="project" value="UniProtKB-UniRule"/>
</dbReference>
<dbReference type="GO" id="GO:0003735">
    <property type="term" value="F:structural constituent of ribosome"/>
    <property type="evidence" value="ECO:0000318"/>
    <property type="project" value="GO_Central"/>
</dbReference>
<dbReference type="GO" id="GO:0000049">
    <property type="term" value="F:tRNA binding"/>
    <property type="evidence" value="ECO:0007669"/>
    <property type="project" value="UniProtKB-UniRule"/>
</dbReference>
<dbReference type="GO" id="GO:0006412">
    <property type="term" value="P:translation"/>
    <property type="evidence" value="ECO:0000318"/>
    <property type="project" value="GO_Central"/>
</dbReference>
<dbReference type="FunFam" id="3.30.1440.10:FF:000001">
    <property type="entry name" value="50S ribosomal protein L5"/>
    <property type="match status" value="1"/>
</dbReference>
<dbReference type="Gene3D" id="3.30.1440.10">
    <property type="match status" value="1"/>
</dbReference>
<dbReference type="HAMAP" id="MF_01333_B">
    <property type="entry name" value="Ribosomal_uL5_B"/>
    <property type="match status" value="1"/>
</dbReference>
<dbReference type="InterPro" id="IPR002132">
    <property type="entry name" value="Ribosomal_uL5"/>
</dbReference>
<dbReference type="InterPro" id="IPR020930">
    <property type="entry name" value="Ribosomal_uL5_bac-type"/>
</dbReference>
<dbReference type="InterPro" id="IPR031309">
    <property type="entry name" value="Ribosomal_uL5_C"/>
</dbReference>
<dbReference type="InterPro" id="IPR020929">
    <property type="entry name" value="Ribosomal_uL5_CS"/>
</dbReference>
<dbReference type="InterPro" id="IPR022803">
    <property type="entry name" value="Ribosomal_uL5_dom_sf"/>
</dbReference>
<dbReference type="InterPro" id="IPR031310">
    <property type="entry name" value="Ribosomal_uL5_N"/>
</dbReference>
<dbReference type="NCBIfam" id="NF000585">
    <property type="entry name" value="PRK00010.1"/>
    <property type="match status" value="1"/>
</dbReference>
<dbReference type="PANTHER" id="PTHR11994">
    <property type="entry name" value="60S RIBOSOMAL PROTEIN L11-RELATED"/>
    <property type="match status" value="1"/>
</dbReference>
<dbReference type="Pfam" id="PF00281">
    <property type="entry name" value="Ribosomal_L5"/>
    <property type="match status" value="1"/>
</dbReference>
<dbReference type="Pfam" id="PF00673">
    <property type="entry name" value="Ribosomal_L5_C"/>
    <property type="match status" value="1"/>
</dbReference>
<dbReference type="PIRSF" id="PIRSF002161">
    <property type="entry name" value="Ribosomal_L5"/>
    <property type="match status" value="1"/>
</dbReference>
<dbReference type="SUPFAM" id="SSF55282">
    <property type="entry name" value="RL5-like"/>
    <property type="match status" value="1"/>
</dbReference>
<dbReference type="PROSITE" id="PS00358">
    <property type="entry name" value="RIBOSOMAL_L5"/>
    <property type="match status" value="1"/>
</dbReference>
<accession>P44346</accession>
<name>RL5_HAEIN</name>
<sequence>MAKLHDYYRDQVVSELKNKFGYKSVMQVPRIEKITLNMGVGEALTDKKLLDNAVADLAAISGQKPLVTKARKSVAGFKIRQGYPIGCKVTLRGERMWEFFERLITIAVPRIRDFRGLSAKSFDGRGNYSMGVREQIIFPEIDYDKVDRVRGLDITITTTAKNDEEGQALLAAFNFPFRK</sequence>
<evidence type="ECO:0000250" key="1"/>
<evidence type="ECO:0000255" key="2">
    <source>
        <dbReference type="HAMAP-Rule" id="MF_01333"/>
    </source>
</evidence>
<evidence type="ECO:0000305" key="3"/>
<reference key="1">
    <citation type="journal article" date="1995" name="Science">
        <title>Whole-genome random sequencing and assembly of Haemophilus influenzae Rd.</title>
        <authorList>
            <person name="Fleischmann R.D."/>
            <person name="Adams M.D."/>
            <person name="White O."/>
            <person name="Clayton R.A."/>
            <person name="Kirkness E.F."/>
            <person name="Kerlavage A.R."/>
            <person name="Bult C.J."/>
            <person name="Tomb J.-F."/>
            <person name="Dougherty B.A."/>
            <person name="Merrick J.M."/>
            <person name="McKenney K."/>
            <person name="Sutton G.G."/>
            <person name="FitzHugh W."/>
            <person name="Fields C.A."/>
            <person name="Gocayne J.D."/>
            <person name="Scott J.D."/>
            <person name="Shirley R."/>
            <person name="Liu L.-I."/>
            <person name="Glodek A."/>
            <person name="Kelley J.M."/>
            <person name="Weidman J.F."/>
            <person name="Phillips C.A."/>
            <person name="Spriggs T."/>
            <person name="Hedblom E."/>
            <person name="Cotton M.D."/>
            <person name="Utterback T.R."/>
            <person name="Hanna M.C."/>
            <person name="Nguyen D.T."/>
            <person name="Saudek D.M."/>
            <person name="Brandon R.C."/>
            <person name="Fine L.D."/>
            <person name="Fritchman J.L."/>
            <person name="Fuhrmann J.L."/>
            <person name="Geoghagen N.S.M."/>
            <person name="Gnehm C.L."/>
            <person name="McDonald L.A."/>
            <person name="Small K.V."/>
            <person name="Fraser C.M."/>
            <person name="Smith H.O."/>
            <person name="Venter J.C."/>
        </authorList>
    </citation>
    <scope>NUCLEOTIDE SEQUENCE [LARGE SCALE GENOMIC DNA]</scope>
    <source>
        <strain>ATCC 51907 / DSM 11121 / KW20 / Rd</strain>
    </source>
</reference>
<feature type="initiator methionine" description="Removed" evidence="1">
    <location>
        <position position="1"/>
    </location>
</feature>
<feature type="chain" id="PRO_0000124933" description="Large ribosomal subunit protein uL5">
    <location>
        <begin position="2"/>
        <end position="179"/>
    </location>
</feature>
<protein>
    <recommendedName>
        <fullName evidence="2">Large ribosomal subunit protein uL5</fullName>
    </recommendedName>
    <alternativeName>
        <fullName evidence="3">50S ribosomal protein L5</fullName>
    </alternativeName>
</protein>
<keyword id="KW-1185">Reference proteome</keyword>
<keyword id="KW-0687">Ribonucleoprotein</keyword>
<keyword id="KW-0689">Ribosomal protein</keyword>
<keyword id="KW-0694">RNA-binding</keyword>
<keyword id="KW-0699">rRNA-binding</keyword>
<keyword id="KW-0820">tRNA-binding</keyword>